<reference key="1">
    <citation type="journal article" date="2007" name="Nat. Biotechnol.">
        <title>Genome sequence of the lignocellulose-bioconverting and xylose-fermenting yeast Pichia stipitis.</title>
        <authorList>
            <person name="Jeffries T.W."/>
            <person name="Grigoriev I.V."/>
            <person name="Grimwood J."/>
            <person name="Laplaza J.M."/>
            <person name="Aerts A."/>
            <person name="Salamov A."/>
            <person name="Schmutz J."/>
            <person name="Lindquist E."/>
            <person name="Dehal P."/>
            <person name="Shapiro H."/>
            <person name="Jin Y.-S."/>
            <person name="Passoth V."/>
            <person name="Richardson P.M."/>
        </authorList>
    </citation>
    <scope>NUCLEOTIDE SEQUENCE [LARGE SCALE GENOMIC DNA]</scope>
    <source>
        <strain>ATCC 58785 / CBS 6054 / NBRC 10063 / NRRL Y-11545</strain>
    </source>
</reference>
<dbReference type="EMBL" id="AAVQ01000001">
    <property type="protein sequence ID" value="EAZ63583.2"/>
    <property type="molecule type" value="Genomic_DNA"/>
</dbReference>
<dbReference type="RefSeq" id="XP_001387606.2">
    <property type="nucleotide sequence ID" value="XM_001387569.1"/>
</dbReference>
<dbReference type="SMR" id="A3GGS6"/>
<dbReference type="FunCoup" id="A3GGS6">
    <property type="interactions" value="1173"/>
</dbReference>
<dbReference type="STRING" id="322104.A3GGS6"/>
<dbReference type="GeneID" id="4851475"/>
<dbReference type="KEGG" id="pic:PICST_85815"/>
<dbReference type="eggNOG" id="KOG1837">
    <property type="taxonomic scope" value="Eukaryota"/>
</dbReference>
<dbReference type="HOGENOM" id="CLU_001128_3_1_1"/>
<dbReference type="InParanoid" id="A3GGS6"/>
<dbReference type="OMA" id="GEPFDRY"/>
<dbReference type="OrthoDB" id="31183at2759"/>
<dbReference type="Proteomes" id="UP000002258">
    <property type="component" value="Chromosome 1"/>
</dbReference>
<dbReference type="GO" id="GO:0030686">
    <property type="term" value="C:90S preribosome"/>
    <property type="evidence" value="ECO:0007669"/>
    <property type="project" value="EnsemblFungi"/>
</dbReference>
<dbReference type="GO" id="GO:0016020">
    <property type="term" value="C:membrane"/>
    <property type="evidence" value="ECO:0007669"/>
    <property type="project" value="UniProtKB-SubCell"/>
</dbReference>
<dbReference type="GO" id="GO:0030688">
    <property type="term" value="C:preribosome, small subunit precursor"/>
    <property type="evidence" value="ECO:0007669"/>
    <property type="project" value="EnsemblFungi"/>
</dbReference>
<dbReference type="GO" id="GO:0033553">
    <property type="term" value="C:rDNA heterochromatin"/>
    <property type="evidence" value="ECO:0007669"/>
    <property type="project" value="EnsemblFungi"/>
</dbReference>
<dbReference type="GO" id="GO:0032040">
    <property type="term" value="C:small-subunit processome"/>
    <property type="evidence" value="ECO:0007669"/>
    <property type="project" value="EnsemblFungi"/>
</dbReference>
<dbReference type="GO" id="GO:0034455">
    <property type="term" value="C:t-UTP complex"/>
    <property type="evidence" value="ECO:0007669"/>
    <property type="project" value="EnsemblFungi"/>
</dbReference>
<dbReference type="GO" id="GO:0034511">
    <property type="term" value="F:U3 snoRNA binding"/>
    <property type="evidence" value="ECO:0007669"/>
    <property type="project" value="EnsemblFungi"/>
</dbReference>
<dbReference type="GO" id="GO:0000480">
    <property type="term" value="P:endonucleolytic cleavage in 5'-ETS of tricistronic rRNA transcript (SSU-rRNA, 5.8S rRNA, LSU-rRNA)"/>
    <property type="evidence" value="ECO:0007669"/>
    <property type="project" value="EnsemblFungi"/>
</dbReference>
<dbReference type="GO" id="GO:0000447">
    <property type="term" value="P:endonucleolytic cleavage in ITS1 to separate SSU-rRNA from 5.8S rRNA and LSU-rRNA from tricistronic rRNA transcript (SSU-rRNA, 5.8S rRNA, LSU-rRNA)"/>
    <property type="evidence" value="ECO:0007669"/>
    <property type="project" value="EnsemblFungi"/>
</dbReference>
<dbReference type="GO" id="GO:0000472">
    <property type="term" value="P:endonucleolytic cleavage to generate mature 5'-end of SSU-rRNA from (SSU-rRNA, 5.8S rRNA, LSU-rRNA)"/>
    <property type="evidence" value="ECO:0007669"/>
    <property type="project" value="EnsemblFungi"/>
</dbReference>
<dbReference type="GO" id="GO:0045943">
    <property type="term" value="P:positive regulation of transcription by RNA polymerase I"/>
    <property type="evidence" value="ECO:0007669"/>
    <property type="project" value="EnsemblFungi"/>
</dbReference>
<dbReference type="Gene3D" id="1.25.10.10">
    <property type="entry name" value="Leucine-rich Repeat Variant"/>
    <property type="match status" value="2"/>
</dbReference>
<dbReference type="InterPro" id="IPR011989">
    <property type="entry name" value="ARM-like"/>
</dbReference>
<dbReference type="InterPro" id="IPR016024">
    <property type="entry name" value="ARM-type_fold"/>
</dbReference>
<dbReference type="InterPro" id="IPR012954">
    <property type="entry name" value="BP28_C_dom"/>
</dbReference>
<dbReference type="InterPro" id="IPR021133">
    <property type="entry name" value="HEAT_type_2"/>
</dbReference>
<dbReference type="InterPro" id="IPR056473">
    <property type="entry name" value="HEAT_Utp10/HEAT1"/>
</dbReference>
<dbReference type="InterPro" id="IPR022125">
    <property type="entry name" value="U3snoRNP10_N"/>
</dbReference>
<dbReference type="InterPro" id="IPR040191">
    <property type="entry name" value="UTP10"/>
</dbReference>
<dbReference type="PANTHER" id="PTHR13457">
    <property type="entry name" value="BAP28"/>
    <property type="match status" value="1"/>
</dbReference>
<dbReference type="PANTHER" id="PTHR13457:SF1">
    <property type="entry name" value="HEAT REPEAT-CONTAINING PROTEIN 1"/>
    <property type="match status" value="1"/>
</dbReference>
<dbReference type="Pfam" id="PF08146">
    <property type="entry name" value="BP28CT"/>
    <property type="match status" value="1"/>
</dbReference>
<dbReference type="Pfam" id="PF23243">
    <property type="entry name" value="HEAT_HEATR1"/>
    <property type="match status" value="1"/>
</dbReference>
<dbReference type="Pfam" id="PF12397">
    <property type="entry name" value="U3snoRNP10"/>
    <property type="match status" value="1"/>
</dbReference>
<dbReference type="SMART" id="SM01036">
    <property type="entry name" value="BP28CT"/>
    <property type="match status" value="1"/>
</dbReference>
<dbReference type="SUPFAM" id="SSF48371">
    <property type="entry name" value="ARM repeat"/>
    <property type="match status" value="1"/>
</dbReference>
<dbReference type="PROSITE" id="PS50077">
    <property type="entry name" value="HEAT_REPEAT"/>
    <property type="match status" value="1"/>
</dbReference>
<accession>A3GGS6</accession>
<feature type="chain" id="PRO_0000308512" description="U3 small nucleolar RNA-associated protein 10">
    <location>
        <begin position="1"/>
        <end position="1836"/>
    </location>
</feature>
<feature type="transmembrane region" description="Helical" evidence="2">
    <location>
        <begin position="998"/>
        <end position="1018"/>
    </location>
</feature>
<feature type="transmembrane region" description="Helical" evidence="2">
    <location>
        <begin position="1085"/>
        <end position="1105"/>
    </location>
</feature>
<feature type="repeat" description="HEAT 1" evidence="2">
    <location>
        <begin position="245"/>
        <end position="283"/>
    </location>
</feature>
<feature type="repeat" description="HEAT 2" evidence="2">
    <location>
        <begin position="585"/>
        <end position="623"/>
    </location>
</feature>
<feature type="repeat" description="HEAT 3" evidence="2">
    <location>
        <begin position="813"/>
        <end position="850"/>
    </location>
</feature>
<feature type="repeat" description="HEAT 4" evidence="2">
    <location>
        <begin position="1333"/>
        <end position="1372"/>
    </location>
</feature>
<feature type="repeat" description="HEAT 5" evidence="2">
    <location>
        <begin position="1749"/>
        <end position="1787"/>
    </location>
</feature>
<feature type="repeat" description="HEAT 6" evidence="2">
    <location>
        <begin position="1790"/>
        <end position="1828"/>
    </location>
</feature>
<feature type="region of interest" description="Disordered" evidence="3">
    <location>
        <begin position="453"/>
        <end position="473"/>
    </location>
</feature>
<feature type="region of interest" description="Disordered" evidence="3">
    <location>
        <begin position="863"/>
        <end position="883"/>
    </location>
</feature>
<feature type="compositionally biased region" description="Acidic residues" evidence="3">
    <location>
        <begin position="461"/>
        <end position="473"/>
    </location>
</feature>
<gene>
    <name evidence="1" type="primary">UTP10</name>
    <name type="ORF">PICST_85815</name>
</gene>
<organism>
    <name type="scientific">Scheffersomyces stipitis (strain ATCC 58785 / CBS 6054 / NBRC 10063 / NRRL Y-11545)</name>
    <name type="common">Yeast</name>
    <name type="synonym">Pichia stipitis</name>
    <dbReference type="NCBI Taxonomy" id="322104"/>
    <lineage>
        <taxon>Eukaryota</taxon>
        <taxon>Fungi</taxon>
        <taxon>Dikarya</taxon>
        <taxon>Ascomycota</taxon>
        <taxon>Saccharomycotina</taxon>
        <taxon>Pichiomycetes</taxon>
        <taxon>Debaryomycetaceae</taxon>
        <taxon>Scheffersomyces</taxon>
    </lineage>
</organism>
<comment type="function">
    <text evidence="1">Involved in nucleolar processing of pre-18S ribosomal RNA. Involved in ribosome biosynthesis (By similarity).</text>
</comment>
<comment type="subunit">
    <text evidence="1">Component of the ribosomal small subunit (SSU) processome.</text>
</comment>
<comment type="subcellular location">
    <subcellularLocation>
        <location evidence="1 2">Nucleus</location>
        <location evidence="1 2">Nucleolus</location>
    </subcellularLocation>
    <subcellularLocation>
        <location evidence="2">Membrane</location>
        <topology evidence="2">Multi-pass membrane protein</topology>
    </subcellularLocation>
</comment>
<comment type="similarity">
    <text evidence="4">Belongs to the HEATR1/UTP10 family.</text>
</comment>
<proteinExistence type="inferred from homology"/>
<name>UTP10_PICST</name>
<keyword id="KW-0472">Membrane</keyword>
<keyword id="KW-0539">Nucleus</keyword>
<keyword id="KW-1185">Reference proteome</keyword>
<keyword id="KW-0677">Repeat</keyword>
<keyword id="KW-0687">Ribonucleoprotein</keyword>
<keyword id="KW-0690">Ribosome biogenesis</keyword>
<keyword id="KW-0698">rRNA processing</keyword>
<keyword id="KW-0812">Transmembrane</keyword>
<keyword id="KW-1133">Transmembrane helix</keyword>
<protein>
    <recommendedName>
        <fullName>U3 small nucleolar RNA-associated protein 10</fullName>
    </recommendedName>
</protein>
<evidence type="ECO:0000250" key="1">
    <source>
        <dbReference type="UniProtKB" id="P42945"/>
    </source>
</evidence>
<evidence type="ECO:0000255" key="2"/>
<evidence type="ECO:0000256" key="3">
    <source>
        <dbReference type="SAM" id="MobiDB-lite"/>
    </source>
</evidence>
<evidence type="ECO:0000305" key="4"/>
<sequence>MSSLADQLKVIKEKTASVVLDRKARSKIHSRSLIFDPKVASTQDYDYLYQLGLEGLDELSEIDSRFSKFRHTLFSETSVSMDRNVQTKDVISQLDKNIDAFLTLAGPFYSLAPTVKAVEWLVRRFHINMHNGEMLLLTSLPHYNQSVFVKILNVIPKNSFPKIFDWVVGYKDLLKNPPSSSILKAFHNDFEFFKLYAMFLVEQLKNGTVYQEQLSFFLSTTVQLLASLSKSLDTLNENHLPVVLEVVGFLLLPSKYETLRNIDVDTRLTAYSIIAVLASIIPISTELIRSFTESILQDPRSLEPNSVRQTLIVLSQLWRFYQGDFSDREAIVKCFANLAPSKLIKVEHLVKDLVADNYKFQKFLTFYFFATFPNPESYKIFQLVDLGKSELYFSEIAKQIVENSTATDKCRSVVIHICEELLKSNSELFIKALATQEMNIDALEMKLMTTLGSNSSVRDSDDVEFDAGEEDNNDEETEEVAVQFATAANLDSIKSSSKSFFTSSSDSEFSKLTLDLISLLRNVTVKVQKSLLLKFTTSVFSSIETGISFLIRIAFTPSIPLSIRLTAIRCTKWKLKEASTSSSSPLDLYLLIPIFLLGVYDETRVVRAGFVQLLRFIKETTTSIHANKKKVKSVLFMEDVIYDTTEASKRAIISPNDALFFTELLLKEDVLEDVIIDRSRLVPKFGQLILKTFVINQWSLNFFPVVFKWRAWNIVALENKNGTEDRFFFTDSDLSEYFTKRSNWIQQANDAKIAFFEEVEGAIVGLVGGNSTNEAKTATEVDWIIQSLNSQFSNLQIAVNSRLLEIFNNFSTVENRIKIVNKLIDLLNNDEPIESDPMDTLQTLKLDQDLFISVLGNVQIGGQIPEQGPAKRRRRSSSSTKQAMAREDINNMASTHLKKLTIILDLLETNLRNGTETIASPNLLQALFKILTDLDYLGNDGNLPVLYAQEALASCMILSIVKMKNSDETFKFDSNSIRADLIVNSIRSSQSPQVQNRLLLVIAELASLAPEIVLHSVMPIFTFMGAHTVRQDDEFSSSALQQTIAKVIPAVAANGSSSISNEIEFLLTSFVTAFQHIPRHRRVKLFTYLIRTLGSDLSLHVLLFLMGQQYCSSLNKNKMADAQVILEFTSSFLKSFSAIEQLEGISKFAELWDMIPIAELEANSEEYNKLSTRSIFGVSILSLTNSGLSTLRIEMLKYISSVVATENSNFDANTLKTKVAMVLLDSSINDDDEEKKSILGSFRNVAAFLLSSLDTFTNVSRNSEIALSLYDLLANFLNLLPIHYFVDSIFESLDVGKFSDTLSIKVAKNLVILAGAKFESELSSINIDEKIEESVLEKLLPVLLHGIKKNVDIELEQAYLDTFAIIVNKFGASTKTLATPTNSRLLLESLQAITSENCLLSESPETIISSINAITSIVNVLGVKTIGIFPKIVPPSLKIWETTTHSEDEESAKLIQSSIIVLLSCLIKKIPAFMTSSLDSIFITILSSDYVDNSIRTSVLGLVVEHMDSSQVLKSLCNIWCNKKFYENDNTGNIGLYLNTMQSTIDKIDKKSAATQSTVFIKWLIQAFEFRHYSEEADNKFDNNTIHRLESSFHSCGISYVMKLNDKKFRPLFATLVRWAVEGEGSNFSENTEVSRLVAFFKFFNKMQEQLKSIITSYFSYLLDPVASVLTRFSSGQLKDINLRRILLNSLTSSFKYDQDDYWSQQGRFDSICNPLLEQLTNIEEGIGKYLIKSITAFINNVASEEYNETLVHGLIKYISNEKEDNSSSTKIWTIRALKSIFQKMGEQWLTYLPTLIPYIAELLEDDDQAVEMEVRSGLVRVIENVLGEPLDRYLD</sequence>